<evidence type="ECO:0000255" key="1"/>
<evidence type="ECO:0000256" key="2">
    <source>
        <dbReference type="SAM" id="MobiDB-lite"/>
    </source>
</evidence>
<evidence type="ECO:0000269" key="3">
    <source>
    </source>
</evidence>
<evidence type="ECO:0000269" key="4">
    <source>
    </source>
</evidence>
<evidence type="ECO:0000269" key="5">
    <source>
    </source>
</evidence>
<evidence type="ECO:0000269" key="6">
    <source>
    </source>
</evidence>
<evidence type="ECO:0000269" key="7">
    <source>
    </source>
</evidence>
<evidence type="ECO:0000269" key="8">
    <source>
    </source>
</evidence>
<evidence type="ECO:0000269" key="9">
    <source>
    </source>
</evidence>
<evidence type="ECO:0000269" key="10">
    <source>
    </source>
</evidence>
<organism>
    <name type="scientific">Schizosaccharomyces pombe (strain 972 / ATCC 24843)</name>
    <name type="common">Fission yeast</name>
    <dbReference type="NCBI Taxonomy" id="284812"/>
    <lineage>
        <taxon>Eukaryota</taxon>
        <taxon>Fungi</taxon>
        <taxon>Dikarya</taxon>
        <taxon>Ascomycota</taxon>
        <taxon>Taphrinomycotina</taxon>
        <taxon>Schizosaccharomycetes</taxon>
        <taxon>Schizosaccharomycetales</taxon>
        <taxon>Schizosaccharomycetaceae</taxon>
        <taxon>Schizosaccharomyces</taxon>
    </lineage>
</organism>
<gene>
    <name type="primary">tea1</name>
    <name type="synonym">alp8</name>
    <name type="ORF">SPCC1223.06</name>
</gene>
<reference key="1">
    <citation type="journal article" date="1997" name="Cell">
        <title>tea1 and the microtubular cytoskeleton are important for generating global spatial order within the fission yeast cell.</title>
        <authorList>
            <person name="Mata J."/>
            <person name="Nurse P."/>
        </authorList>
    </citation>
    <scope>NUCLEOTIDE SEQUENCE [GENOMIC DNA]</scope>
    <scope>FUNCTION</scope>
    <scope>SUBCELLULAR LOCATION</scope>
</reference>
<reference key="2">
    <citation type="journal article" date="2002" name="Nature">
        <title>The genome sequence of Schizosaccharomyces pombe.</title>
        <authorList>
            <person name="Wood V."/>
            <person name="Gwilliam R."/>
            <person name="Rajandream M.A."/>
            <person name="Lyne M.H."/>
            <person name="Lyne R."/>
            <person name="Stewart A."/>
            <person name="Sgouros J.G."/>
            <person name="Peat N."/>
            <person name="Hayles J."/>
            <person name="Baker S.G."/>
            <person name="Basham D."/>
            <person name="Bowman S."/>
            <person name="Brooks K."/>
            <person name="Brown D."/>
            <person name="Brown S."/>
            <person name="Chillingworth T."/>
            <person name="Churcher C.M."/>
            <person name="Collins M."/>
            <person name="Connor R."/>
            <person name="Cronin A."/>
            <person name="Davis P."/>
            <person name="Feltwell T."/>
            <person name="Fraser A."/>
            <person name="Gentles S."/>
            <person name="Goble A."/>
            <person name="Hamlin N."/>
            <person name="Harris D.E."/>
            <person name="Hidalgo J."/>
            <person name="Hodgson G."/>
            <person name="Holroyd S."/>
            <person name="Hornsby T."/>
            <person name="Howarth S."/>
            <person name="Huckle E.J."/>
            <person name="Hunt S."/>
            <person name="Jagels K."/>
            <person name="James K.D."/>
            <person name="Jones L."/>
            <person name="Jones M."/>
            <person name="Leather S."/>
            <person name="McDonald S."/>
            <person name="McLean J."/>
            <person name="Mooney P."/>
            <person name="Moule S."/>
            <person name="Mungall K.L."/>
            <person name="Murphy L.D."/>
            <person name="Niblett D."/>
            <person name="Odell C."/>
            <person name="Oliver K."/>
            <person name="O'Neil S."/>
            <person name="Pearson D."/>
            <person name="Quail M.A."/>
            <person name="Rabbinowitsch E."/>
            <person name="Rutherford K.M."/>
            <person name="Rutter S."/>
            <person name="Saunders D."/>
            <person name="Seeger K."/>
            <person name="Sharp S."/>
            <person name="Skelton J."/>
            <person name="Simmonds M.N."/>
            <person name="Squares R."/>
            <person name="Squares S."/>
            <person name="Stevens K."/>
            <person name="Taylor K."/>
            <person name="Taylor R.G."/>
            <person name="Tivey A."/>
            <person name="Walsh S.V."/>
            <person name="Warren T."/>
            <person name="Whitehead S."/>
            <person name="Woodward J.R."/>
            <person name="Volckaert G."/>
            <person name="Aert R."/>
            <person name="Robben J."/>
            <person name="Grymonprez B."/>
            <person name="Weltjens I."/>
            <person name="Vanstreels E."/>
            <person name="Rieger M."/>
            <person name="Schaefer M."/>
            <person name="Mueller-Auer S."/>
            <person name="Gabel C."/>
            <person name="Fuchs M."/>
            <person name="Duesterhoeft A."/>
            <person name="Fritzc C."/>
            <person name="Holzer E."/>
            <person name="Moestl D."/>
            <person name="Hilbert H."/>
            <person name="Borzym K."/>
            <person name="Langer I."/>
            <person name="Beck A."/>
            <person name="Lehrach H."/>
            <person name="Reinhardt R."/>
            <person name="Pohl T.M."/>
            <person name="Eger P."/>
            <person name="Zimmermann W."/>
            <person name="Wedler H."/>
            <person name="Wambutt R."/>
            <person name="Purnelle B."/>
            <person name="Goffeau A."/>
            <person name="Cadieu E."/>
            <person name="Dreano S."/>
            <person name="Gloux S."/>
            <person name="Lelaure V."/>
            <person name="Mottier S."/>
            <person name="Galibert F."/>
            <person name="Aves S.J."/>
            <person name="Xiang Z."/>
            <person name="Hunt C."/>
            <person name="Moore K."/>
            <person name="Hurst S.M."/>
            <person name="Lucas M."/>
            <person name="Rochet M."/>
            <person name="Gaillardin C."/>
            <person name="Tallada V.A."/>
            <person name="Garzon A."/>
            <person name="Thode G."/>
            <person name="Daga R.R."/>
            <person name="Cruzado L."/>
            <person name="Jimenez J."/>
            <person name="Sanchez M."/>
            <person name="del Rey F."/>
            <person name="Benito J."/>
            <person name="Dominguez A."/>
            <person name="Revuelta J.L."/>
            <person name="Moreno S."/>
            <person name="Armstrong J."/>
            <person name="Forsburg S.L."/>
            <person name="Cerutti L."/>
            <person name="Lowe T."/>
            <person name="McCombie W.R."/>
            <person name="Paulsen I."/>
            <person name="Potashkin J."/>
            <person name="Shpakovski G.V."/>
            <person name="Ussery D."/>
            <person name="Barrell B.G."/>
            <person name="Nurse P."/>
        </authorList>
    </citation>
    <scope>NUCLEOTIDE SEQUENCE [LARGE SCALE GENOMIC DNA]</scope>
    <source>
        <strain>972 / ATCC 24843</strain>
    </source>
</reference>
<reference key="3">
    <citation type="journal article" date="2002" name="J. Cell Biol.">
        <title>Roles of fission yeast tea1p in the localization of polarity factors and in organizing the microtubular cytoskeleton.</title>
        <authorList>
            <person name="Behrens R."/>
            <person name="Nurse P."/>
        </authorList>
    </citation>
    <scope>FUNCTION</scope>
    <scope>SUBCELLULAR LOCATION</scope>
</reference>
<reference key="4">
    <citation type="journal article" date="2003" name="Yeast">
        <title>Role of Tea1p, Tea3p and Pom1p in the determination of cell ends in Schizosaccharomyces pombe.</title>
        <authorList>
            <person name="Niccoli T."/>
            <person name="Arellano M."/>
            <person name="Nurse P."/>
        </authorList>
    </citation>
    <scope>FUNCTION</scope>
</reference>
<reference key="5">
    <citation type="journal article" date="2005" name="Curr. Biol.">
        <title>Wsh3/Tea4 is a novel cell-end factor essential for bipolar distribution of Tea1 and protects cell polarity under environmental stress in S. pombe.</title>
        <authorList>
            <person name="Tatebe H."/>
            <person name="Shimada K."/>
            <person name="Uzawa S."/>
            <person name="Morigasaki S."/>
            <person name="Shiozaki K."/>
        </authorList>
    </citation>
    <scope>FUNCTION</scope>
    <scope>SUBCELLULAR LOCATION</scope>
    <scope>INTERACTION WITH TEA4</scope>
</reference>
<reference key="6">
    <citation type="journal article" date="2005" name="Dev. Cell">
        <title>Tea4p links microtubule plus ends with the formin for3p in the establishment of cell polarity.</title>
        <authorList>
            <person name="Martin S.G."/>
            <person name="McDonald W.H."/>
            <person name="Yates J.R. III"/>
            <person name="Chang F."/>
        </authorList>
    </citation>
    <scope>FUNCTION</scope>
    <scope>INTERACTION WITH FOR3; TEA4 AND TIP1</scope>
    <scope>SUBCELLULAR LOCATION</scope>
</reference>
<reference key="7">
    <citation type="journal article" date="2006" name="Mol. Cells">
        <title>Function of rax2p in the polarized growth of fission yeast.</title>
        <authorList>
            <person name="Choi E."/>
            <person name="Lee K."/>
            <person name="Song K."/>
        </authorList>
    </citation>
    <scope>INTERACTION WITH RAX2</scope>
</reference>
<reference key="8">
    <citation type="journal article" date="2006" name="Nat. Biotechnol.">
        <title>ORFeome cloning and global analysis of protein localization in the fission yeast Schizosaccharomyces pombe.</title>
        <authorList>
            <person name="Matsuyama A."/>
            <person name="Arai R."/>
            <person name="Yashiroda Y."/>
            <person name="Shirai A."/>
            <person name="Kamata A."/>
            <person name="Sekido S."/>
            <person name="Kobayashi Y."/>
            <person name="Hashimoto A."/>
            <person name="Hamamoto M."/>
            <person name="Hiraoka Y."/>
            <person name="Horinouchi S."/>
            <person name="Yoshida M."/>
        </authorList>
    </citation>
    <scope>SUBCELLULAR LOCATION [LARGE SCALE ANALYSIS]</scope>
</reference>
<reference key="9">
    <citation type="journal article" date="2008" name="J. Proteome Res.">
        <title>Phosphoproteome analysis of fission yeast.</title>
        <authorList>
            <person name="Wilson-Grady J.T."/>
            <person name="Villen J."/>
            <person name="Gygi S.P."/>
        </authorList>
    </citation>
    <scope>PHOSPHORYLATION [LARGE SCALE ANALYSIS] AT SER-503</scope>
    <scope>IDENTIFICATION BY MASS SPECTROMETRY</scope>
</reference>
<accession>P87061</accession>
<comment type="function">
    <text evidence="3 4 5 6 10">Cell polarity protein. Acts as an end marker, directing the growth machinery to the cell poles. Involved in the regulation of microtubular organization, affecting the maintenance of a single central axis. Prevents the curling of microtubule tips around the cell ends and is required for the retention of polarity factors such as pom1, tip1 and tea2 at the cell ends, necessary for the cell to grow in a straight line. Links tip1 and tea4 in a common complex.</text>
</comment>
<comment type="subunit">
    <text evidence="5 6 8">Major component of the tea1 cell-end complex. Interacts with rax2, tea4 and tip1. Interacts with for3 in the presence of tea4.</text>
</comment>
<comment type="interaction">
    <interactant intactId="EBI-875376">
        <id>P87061</id>
    </interactant>
    <interactant intactId="EBI-875326">
        <id>O14248</id>
        <label>tea3</label>
    </interactant>
    <organismsDiffer>false</organismsDiffer>
    <experiments>2</experiments>
</comment>
<comment type="interaction">
    <interactant intactId="EBI-875376">
        <id>P87061</id>
    </interactant>
    <interactant intactId="EBI-1099982">
        <id>O60132</id>
        <label>tea4</label>
    </interactant>
    <organismsDiffer>false</organismsDiffer>
    <experiments>10</experiments>
</comment>
<comment type="interaction">
    <interactant intactId="EBI-875376">
        <id>P87061</id>
    </interactant>
    <interactant intactId="EBI-1102463">
        <id>P79065</id>
        <label>tip1</label>
    </interactant>
    <organismsDiffer>false</organismsDiffer>
    <experiments>5</experiments>
</comment>
<comment type="subcellular location">
    <subcellularLocation>
        <location evidence="3 5 6 7 10">Cytoplasm</location>
        <location evidence="3 5 6 7 10">Cytoskeleton</location>
    </subcellularLocation>
    <text>Present at both poles of the cell throughout the cell cycle whether they are growing or not. Located at the ends of microtubules growing towards the cell poles. An intact microtubular skeleton is required to maintain the location at the cell tips; on the other hand, a normally organized actin cytoskeleton is not required.</text>
</comment>
<sequence>MSFLFKRNKGSAHKPTKPNFSKTSTTPSTSQLKHSHESNVKMSTSTVTEHRKKPTGSGSHITASPWSKLTVRGSSNVLPRYSHASHLYAEGGQEIYIFGGVASDSQPKNDLWVLNLATSQFTSLRSLGETPSPRLGHASILIGNAFIVFGGLTNHDVADRQDNSLYLLNTSSLVWQKANASGARPSGRYGHTISCLGSKICLFGGRLLDYYFNDLVCFDLNNLNTSDSRWELASVVNDPPPARAGHVAFTFSDKLYIFGGTDGANFFNDLWCYHPKQSAWSKVETFGVAPNPRAGHAASVVEGILYVFGGRASDGTFLNDLYAFRLSSKHWYKLSDLPFTPSPRSSHTLSCSGLTLVLIGGKQGKGASDSNVYMLDTSRFRLGSVPTTSGRQRNTSFFSNSTGNTNPSAFNGLLTSSRIPSYNGSKVRSTSHPSRQQYIGSSNSRFNTRHQTISTPVSGRASNDLPSPVVPTRSNSSSILQPSYNLNSHSSDRRNTNDDDQSSLNSQQLSNQAKAQGEVSPTLSFVPSSHSMEQGNGSVASANNAQSEAATRSINSISEVSEVRFPEQSSVKTVDERKSLDGRITSVTLETLVEKYSELSKQQIVEWFKSKLYEILRDSASKIDSLTEKLKVANAEKNAALCEAALEKVPLAKHNKLSDGTFSTPDKENVQSTNDAHIMQENFSLHKALEVMRETSSDLDKQLKDATASQKELIVQTSSFQKELVEERERHNAISKRLQEIESLYRDRELLVTNLEDQLVDQTVTINKFAFERDQFRERSMGFENTIKDLTRKMEATDMLNVSLHESLRSVQTENSELVTEMALLKAELVKKQAIIDANANIYDKLTADHTNYETVSADINQNLKETLDKLLNGSSDFKNNEIELLHDQIRITNAKLEKREKLINASKYIEDTLRSEIQEAAEKVSNLEFSNFNLKEENSNMQLQLMKALEQRNTGAKQLVNLRMQLSTATSELDMLKLKLRTTALALEESPDDYSDILSILRADMSPFHDLHKQCGVLIDTLNGVKRGFGIFEKKFTDYHKFLENISDKLKSEEDTSLETPIHENQSIQSDQIKEVGEVLSAIKSLSDSVMLLKNQIDDLAKEKLPLSSSDDEKVNIKEKTDFMKLLVKSGLSNPPAKEPVHDNEN</sequence>
<proteinExistence type="evidence at protein level"/>
<protein>
    <recommendedName>
        <fullName>Tip elongation aberrant protein 1</fullName>
    </recommendedName>
    <alternativeName>
        <fullName>Altered polarity protein 8</fullName>
    </alternativeName>
    <alternativeName>
        <fullName>Cell polarity protein tea1</fullName>
    </alternativeName>
</protein>
<name>TEA1_SCHPO</name>
<keyword id="KW-0175">Coiled coil</keyword>
<keyword id="KW-0963">Cytoplasm</keyword>
<keyword id="KW-0206">Cytoskeleton</keyword>
<keyword id="KW-0880">Kelch repeat</keyword>
<keyword id="KW-0493">Microtubule</keyword>
<keyword id="KW-0597">Phosphoprotein</keyword>
<keyword id="KW-1185">Reference proteome</keyword>
<keyword id="KW-0677">Repeat</keyword>
<feature type="chain" id="PRO_0000119146" description="Tip elongation aberrant protein 1">
    <location>
        <begin position="1"/>
        <end position="1147"/>
    </location>
</feature>
<feature type="repeat" description="Kelch 1">
    <location>
        <begin position="94"/>
        <end position="144"/>
    </location>
</feature>
<feature type="repeat" description="Kelch 2">
    <location>
        <begin position="146"/>
        <end position="198"/>
    </location>
</feature>
<feature type="repeat" description="Kelch 3">
    <location>
        <begin position="199"/>
        <end position="253"/>
    </location>
</feature>
<feature type="repeat" description="Kelch 4">
    <location>
        <begin position="254"/>
        <end position="303"/>
    </location>
</feature>
<feature type="repeat" description="Kelch 5">
    <location>
        <begin position="305"/>
        <end position="351"/>
    </location>
</feature>
<feature type="repeat" description="Kelch 6">
    <location>
        <begin position="355"/>
        <end position="402"/>
    </location>
</feature>
<feature type="region of interest" description="Disordered" evidence="2">
    <location>
        <begin position="1"/>
        <end position="64"/>
    </location>
</feature>
<feature type="region of interest" description="Disordered" evidence="2">
    <location>
        <begin position="384"/>
        <end position="403"/>
    </location>
</feature>
<feature type="region of interest" description="Disordered" evidence="2">
    <location>
        <begin position="408"/>
        <end position="547"/>
    </location>
</feature>
<feature type="region of interest" description="Interaction with tea4">
    <location>
        <begin position="538"/>
        <end position="1147"/>
    </location>
</feature>
<feature type="region of interest" description="Retention at microtubule cell ends">
    <location>
        <begin position="948"/>
        <end position="1147"/>
    </location>
</feature>
<feature type="coiled-coil region" evidence="1">
    <location>
        <begin position="611"/>
        <end position="649"/>
    </location>
</feature>
<feature type="coiled-coil region" evidence="1">
    <location>
        <begin position="716"/>
        <end position="838"/>
    </location>
</feature>
<feature type="coiled-coil region" evidence="1">
    <location>
        <begin position="879"/>
        <end position="990"/>
    </location>
</feature>
<feature type="coiled-coil region" evidence="1">
    <location>
        <begin position="1084"/>
        <end position="1105"/>
    </location>
</feature>
<feature type="compositionally biased region" description="Basic residues" evidence="2">
    <location>
        <begin position="1"/>
        <end position="16"/>
    </location>
</feature>
<feature type="compositionally biased region" description="Polar residues" evidence="2">
    <location>
        <begin position="18"/>
        <end position="32"/>
    </location>
</feature>
<feature type="compositionally biased region" description="Polar residues" evidence="2">
    <location>
        <begin position="385"/>
        <end position="403"/>
    </location>
</feature>
<feature type="compositionally biased region" description="Polar residues" evidence="2">
    <location>
        <begin position="408"/>
        <end position="465"/>
    </location>
</feature>
<feature type="compositionally biased region" description="Polar residues" evidence="2">
    <location>
        <begin position="472"/>
        <end position="489"/>
    </location>
</feature>
<feature type="compositionally biased region" description="Low complexity" evidence="2">
    <location>
        <begin position="502"/>
        <end position="512"/>
    </location>
</feature>
<feature type="compositionally biased region" description="Polar residues" evidence="2">
    <location>
        <begin position="519"/>
        <end position="547"/>
    </location>
</feature>
<feature type="modified residue" description="Phosphoserine" evidence="9">
    <location>
        <position position="503"/>
    </location>
</feature>
<dbReference type="EMBL" id="Y12709">
    <property type="protein sequence ID" value="CAA73246.1"/>
    <property type="molecule type" value="Genomic_DNA"/>
</dbReference>
<dbReference type="EMBL" id="CU329672">
    <property type="protein sequence ID" value="CAA20875.1"/>
    <property type="molecule type" value="Genomic_DNA"/>
</dbReference>
<dbReference type="PIR" id="T40866">
    <property type="entry name" value="T40866"/>
</dbReference>
<dbReference type="RefSeq" id="NP_588351.1">
    <property type="nucleotide sequence ID" value="NM_001023342.2"/>
</dbReference>
<dbReference type="SMR" id="P87061"/>
<dbReference type="BioGRID" id="275620">
    <property type="interactions" value="256"/>
</dbReference>
<dbReference type="FunCoup" id="P87061">
    <property type="interactions" value="15"/>
</dbReference>
<dbReference type="IntAct" id="P87061">
    <property type="interactions" value="5"/>
</dbReference>
<dbReference type="STRING" id="284812.P87061"/>
<dbReference type="iPTMnet" id="P87061"/>
<dbReference type="SwissPalm" id="P87061"/>
<dbReference type="PaxDb" id="4896-SPCC1223.06.1"/>
<dbReference type="EnsemblFungi" id="SPCC1223.06.1">
    <property type="protein sequence ID" value="SPCC1223.06.1:pep"/>
    <property type="gene ID" value="SPCC1223.06"/>
</dbReference>
<dbReference type="GeneID" id="2539047"/>
<dbReference type="KEGG" id="spo:2539047"/>
<dbReference type="PomBase" id="SPCC1223.06">
    <property type="gene designation" value="tea1"/>
</dbReference>
<dbReference type="VEuPathDB" id="FungiDB:SPCC1223.06"/>
<dbReference type="eggNOG" id="KOG0379">
    <property type="taxonomic scope" value="Eukaryota"/>
</dbReference>
<dbReference type="HOGENOM" id="CLU_275217_0_0_1"/>
<dbReference type="InParanoid" id="P87061"/>
<dbReference type="OMA" id="WNRIKLQ"/>
<dbReference type="PhylomeDB" id="P87061"/>
<dbReference type="PRO" id="PR:P87061"/>
<dbReference type="Proteomes" id="UP000002485">
    <property type="component" value="Chromosome III"/>
</dbReference>
<dbReference type="GO" id="GO:0051285">
    <property type="term" value="C:cell cortex of cell tip"/>
    <property type="evidence" value="ECO:0000314"/>
    <property type="project" value="PomBase"/>
</dbReference>
<dbReference type="GO" id="GO:0032153">
    <property type="term" value="C:cell division site"/>
    <property type="evidence" value="ECO:0000314"/>
    <property type="project" value="PomBase"/>
</dbReference>
<dbReference type="GO" id="GO:0051286">
    <property type="term" value="C:cell tip"/>
    <property type="evidence" value="ECO:0000314"/>
    <property type="project" value="PomBase"/>
</dbReference>
<dbReference type="GO" id="GO:0005881">
    <property type="term" value="C:cytoplasmic microtubule"/>
    <property type="evidence" value="ECO:0000269"/>
    <property type="project" value="PomBase"/>
</dbReference>
<dbReference type="GO" id="GO:1904511">
    <property type="term" value="C:cytoplasmic microtubule plus-end"/>
    <property type="evidence" value="ECO:0000314"/>
    <property type="project" value="PomBase"/>
</dbReference>
<dbReference type="GO" id="GO:0000935">
    <property type="term" value="C:division septum"/>
    <property type="evidence" value="ECO:0000314"/>
    <property type="project" value="PomBase"/>
</dbReference>
<dbReference type="GO" id="GO:0035838">
    <property type="term" value="C:growing cell tip"/>
    <property type="evidence" value="ECO:0000314"/>
    <property type="project" value="PomBase"/>
</dbReference>
<dbReference type="GO" id="GO:0015630">
    <property type="term" value="C:microtubule cytoskeleton"/>
    <property type="evidence" value="ECO:0007005"/>
    <property type="project" value="PomBase"/>
</dbReference>
<dbReference type="GO" id="GO:1990752">
    <property type="term" value="C:microtubule end"/>
    <property type="evidence" value="ECO:0000314"/>
    <property type="project" value="PomBase"/>
</dbReference>
<dbReference type="GO" id="GO:0035839">
    <property type="term" value="C:non-growing cell tip"/>
    <property type="evidence" value="ECO:0000314"/>
    <property type="project" value="PomBase"/>
</dbReference>
<dbReference type="GO" id="GO:0035840">
    <property type="term" value="C:old growing cell tip"/>
    <property type="evidence" value="ECO:0000314"/>
    <property type="project" value="PomBase"/>
</dbReference>
<dbReference type="GO" id="GO:0099070">
    <property type="term" value="C:static microtubule bundle"/>
    <property type="evidence" value="ECO:0000314"/>
    <property type="project" value="PomBase"/>
</dbReference>
<dbReference type="GO" id="GO:0043495">
    <property type="term" value="F:protein-membrane adaptor activity"/>
    <property type="evidence" value="ECO:0000315"/>
    <property type="project" value="PomBase"/>
</dbReference>
<dbReference type="GO" id="GO:0061245">
    <property type="term" value="P:establishment or maintenance of bipolar cell polarity"/>
    <property type="evidence" value="ECO:0000315"/>
    <property type="project" value="PomBase"/>
</dbReference>
<dbReference type="GO" id="GO:1990896">
    <property type="term" value="P:protein localization to cell cortex of cell tip"/>
    <property type="evidence" value="ECO:0000314"/>
    <property type="project" value="PomBase"/>
</dbReference>
<dbReference type="FunFam" id="2.120.10.80:FF:000049">
    <property type="entry name" value="Cell polarity protein (Tea1)"/>
    <property type="match status" value="1"/>
</dbReference>
<dbReference type="Gene3D" id="2.120.10.80">
    <property type="entry name" value="Kelch-type beta propeller"/>
    <property type="match status" value="2"/>
</dbReference>
<dbReference type="InterPro" id="IPR015915">
    <property type="entry name" value="Kelch-typ_b-propeller"/>
</dbReference>
<dbReference type="InterPro" id="IPR006652">
    <property type="entry name" value="Kelch_1"/>
</dbReference>
<dbReference type="PANTHER" id="PTHR46093">
    <property type="entry name" value="ACYL-COA-BINDING DOMAIN-CONTAINING PROTEIN 5"/>
    <property type="match status" value="1"/>
</dbReference>
<dbReference type="PANTHER" id="PTHR46093:SF18">
    <property type="entry name" value="FIBRONECTIN TYPE-III DOMAIN-CONTAINING PROTEIN"/>
    <property type="match status" value="1"/>
</dbReference>
<dbReference type="Pfam" id="PF13418">
    <property type="entry name" value="Kelch_4"/>
    <property type="match status" value="1"/>
</dbReference>
<dbReference type="Pfam" id="PF24681">
    <property type="entry name" value="Kelch_KLHDC2_KLHL20_DRC7"/>
    <property type="match status" value="1"/>
</dbReference>
<dbReference type="SMART" id="SM00612">
    <property type="entry name" value="Kelch"/>
    <property type="match status" value="3"/>
</dbReference>
<dbReference type="SUPFAM" id="SSF117281">
    <property type="entry name" value="Kelch motif"/>
    <property type="match status" value="1"/>
</dbReference>